<comment type="function">
    <text evidence="1">Specifically methylates the cytosine at position 1407 (m5C1407) of 16S rRNA.</text>
</comment>
<comment type="catalytic activity">
    <reaction evidence="1">
        <text>cytidine(1407) in 16S rRNA + S-adenosyl-L-methionine = 5-methylcytidine(1407) in 16S rRNA + S-adenosyl-L-homocysteine + H(+)</text>
        <dbReference type="Rhea" id="RHEA:42756"/>
        <dbReference type="Rhea" id="RHEA-COMP:10223"/>
        <dbReference type="Rhea" id="RHEA-COMP:10224"/>
        <dbReference type="ChEBI" id="CHEBI:15378"/>
        <dbReference type="ChEBI" id="CHEBI:57856"/>
        <dbReference type="ChEBI" id="CHEBI:59789"/>
        <dbReference type="ChEBI" id="CHEBI:74483"/>
        <dbReference type="ChEBI" id="CHEBI:82748"/>
        <dbReference type="EC" id="2.1.1.178"/>
    </reaction>
</comment>
<comment type="subcellular location">
    <subcellularLocation>
        <location evidence="1">Cytoplasm</location>
    </subcellularLocation>
</comment>
<comment type="similarity">
    <text evidence="1">Belongs to the class I-like SAM-binding methyltransferase superfamily. RsmB/NOP family.</text>
</comment>
<comment type="sequence caution" evidence="2">
    <conflict type="erroneous initiation">
        <sequence resource="EMBL-CDS" id="ABX20997"/>
    </conflict>
</comment>
<accession>A9MNH4</accession>
<gene>
    <name evidence="1" type="primary">rsmF</name>
    <name type="ordered locus">SARI_01091</name>
</gene>
<evidence type="ECO:0000255" key="1">
    <source>
        <dbReference type="HAMAP-Rule" id="MF_01579"/>
    </source>
</evidence>
<evidence type="ECO:0000305" key="2"/>
<feature type="chain" id="PRO_0000382577" description="Ribosomal RNA small subunit methyltransferase F">
    <location>
        <begin position="1"/>
        <end position="479"/>
    </location>
</feature>
<feature type="active site" description="Nucleophile" evidence="1">
    <location>
        <position position="247"/>
    </location>
</feature>
<feature type="binding site" evidence="1">
    <location>
        <begin position="125"/>
        <end position="131"/>
    </location>
    <ligand>
        <name>S-adenosyl-L-methionine</name>
        <dbReference type="ChEBI" id="CHEBI:59789"/>
    </ligand>
</feature>
<feature type="binding site" evidence="1">
    <location>
        <position position="149"/>
    </location>
    <ligand>
        <name>S-adenosyl-L-methionine</name>
        <dbReference type="ChEBI" id="CHEBI:59789"/>
    </ligand>
</feature>
<feature type="binding site" evidence="1">
    <location>
        <position position="176"/>
    </location>
    <ligand>
        <name>S-adenosyl-L-methionine</name>
        <dbReference type="ChEBI" id="CHEBI:59789"/>
    </ligand>
</feature>
<feature type="binding site" evidence="1">
    <location>
        <position position="194"/>
    </location>
    <ligand>
        <name>S-adenosyl-L-methionine</name>
        <dbReference type="ChEBI" id="CHEBI:59789"/>
    </ligand>
</feature>
<dbReference type="EC" id="2.1.1.178" evidence="1"/>
<dbReference type="EMBL" id="CP000880">
    <property type="protein sequence ID" value="ABX20997.1"/>
    <property type="status" value="ALT_INIT"/>
    <property type="molecule type" value="Genomic_DNA"/>
</dbReference>
<dbReference type="SMR" id="A9MNH4"/>
<dbReference type="STRING" id="41514.SARI_01091"/>
<dbReference type="KEGG" id="ses:SARI_01091"/>
<dbReference type="HOGENOM" id="CLU_005316_6_2_6"/>
<dbReference type="Proteomes" id="UP000002084">
    <property type="component" value="Chromosome"/>
</dbReference>
<dbReference type="GO" id="GO:0005737">
    <property type="term" value="C:cytoplasm"/>
    <property type="evidence" value="ECO:0007669"/>
    <property type="project" value="UniProtKB-SubCell"/>
</dbReference>
<dbReference type="GO" id="GO:0003723">
    <property type="term" value="F:RNA binding"/>
    <property type="evidence" value="ECO:0007669"/>
    <property type="project" value="UniProtKB-KW"/>
</dbReference>
<dbReference type="GO" id="GO:0009383">
    <property type="term" value="F:rRNA (cytosine-C5-)-methyltransferase activity"/>
    <property type="evidence" value="ECO:0007669"/>
    <property type="project" value="TreeGrafter"/>
</dbReference>
<dbReference type="GO" id="GO:0070475">
    <property type="term" value="P:rRNA base methylation"/>
    <property type="evidence" value="ECO:0007669"/>
    <property type="project" value="TreeGrafter"/>
</dbReference>
<dbReference type="CDD" id="cd02440">
    <property type="entry name" value="AdoMet_MTases"/>
    <property type="match status" value="1"/>
</dbReference>
<dbReference type="FunFam" id="3.10.450.720:FF:000001">
    <property type="entry name" value="Ribosomal RNA small subunit methyltransferase F"/>
    <property type="match status" value="1"/>
</dbReference>
<dbReference type="FunFam" id="3.40.50.150:FF:000079">
    <property type="entry name" value="Ribosomal RNA small subunit methyltransferase F"/>
    <property type="match status" value="1"/>
</dbReference>
<dbReference type="Gene3D" id="3.10.450.720">
    <property type="match status" value="1"/>
</dbReference>
<dbReference type="Gene3D" id="3.40.50.150">
    <property type="entry name" value="Vaccinia Virus protein VP39"/>
    <property type="match status" value="1"/>
</dbReference>
<dbReference type="HAMAP" id="MF_01579">
    <property type="entry name" value="16SrRNA_methyltr_F"/>
    <property type="match status" value="1"/>
</dbReference>
<dbReference type="InterPro" id="IPR031341">
    <property type="entry name" value="Methyltr_RsmF_N"/>
</dbReference>
<dbReference type="InterPro" id="IPR049560">
    <property type="entry name" value="MeTrfase_RsmB-F_NOP2_cat"/>
</dbReference>
<dbReference type="InterPro" id="IPR001678">
    <property type="entry name" value="MeTrfase_RsmB-F_NOP2_dom"/>
</dbReference>
<dbReference type="InterPro" id="IPR027391">
    <property type="entry name" value="Nol1_Nop2_Fmu_2"/>
</dbReference>
<dbReference type="InterPro" id="IPR011023">
    <property type="entry name" value="Nop2p"/>
</dbReference>
<dbReference type="InterPro" id="IPR023267">
    <property type="entry name" value="RCMT"/>
</dbReference>
<dbReference type="InterPro" id="IPR023545">
    <property type="entry name" value="rRNA_ssu_MeTfrase_F"/>
</dbReference>
<dbReference type="InterPro" id="IPR018314">
    <property type="entry name" value="RsmB/NOL1/NOP2-like_CS"/>
</dbReference>
<dbReference type="InterPro" id="IPR029063">
    <property type="entry name" value="SAM-dependent_MTases_sf"/>
</dbReference>
<dbReference type="InterPro" id="IPR048457">
    <property type="entry name" value="YebU_pre-PUA_dom"/>
</dbReference>
<dbReference type="NCBIfam" id="TIGR00446">
    <property type="entry name" value="nop2p"/>
    <property type="match status" value="1"/>
</dbReference>
<dbReference type="NCBIfam" id="NF008898">
    <property type="entry name" value="PRK11933.1"/>
    <property type="match status" value="1"/>
</dbReference>
<dbReference type="PANTHER" id="PTHR22807:SF30">
    <property type="entry name" value="28S RRNA (CYTOSINE(4447)-C(5))-METHYLTRANSFERASE-RELATED"/>
    <property type="match status" value="1"/>
</dbReference>
<dbReference type="PANTHER" id="PTHR22807">
    <property type="entry name" value="NOP2 YEAST -RELATED NOL1/NOP2/FMU SUN DOMAIN-CONTAINING"/>
    <property type="match status" value="1"/>
</dbReference>
<dbReference type="Pfam" id="PF01189">
    <property type="entry name" value="Methyltr_RsmB-F"/>
    <property type="match status" value="1"/>
</dbReference>
<dbReference type="Pfam" id="PF17125">
    <property type="entry name" value="Methyltr_RsmF_N"/>
    <property type="match status" value="1"/>
</dbReference>
<dbReference type="Pfam" id="PF13636">
    <property type="entry name" value="Methyltranf_PUA"/>
    <property type="match status" value="1"/>
</dbReference>
<dbReference type="Pfam" id="PF21150">
    <property type="entry name" value="YebU_pre-PUA_dom"/>
    <property type="match status" value="1"/>
</dbReference>
<dbReference type="PRINTS" id="PR02008">
    <property type="entry name" value="RCMTFAMILY"/>
</dbReference>
<dbReference type="SUPFAM" id="SSF53335">
    <property type="entry name" value="S-adenosyl-L-methionine-dependent methyltransferases"/>
    <property type="match status" value="1"/>
</dbReference>
<dbReference type="PROSITE" id="PS01153">
    <property type="entry name" value="NOL1_NOP2_SUN"/>
    <property type="match status" value="1"/>
</dbReference>
<dbReference type="PROSITE" id="PS51686">
    <property type="entry name" value="SAM_MT_RSMB_NOP"/>
    <property type="match status" value="1"/>
</dbReference>
<reference key="1">
    <citation type="submission" date="2007-11" db="EMBL/GenBank/DDBJ databases">
        <authorList>
            <consortium name="The Salmonella enterica serovar Arizonae Genome Sequencing Project"/>
            <person name="McClelland M."/>
            <person name="Sanderson E.K."/>
            <person name="Porwollik S."/>
            <person name="Spieth J."/>
            <person name="Clifton W.S."/>
            <person name="Fulton R."/>
            <person name="Chunyan W."/>
            <person name="Wollam A."/>
            <person name="Shah N."/>
            <person name="Pepin K."/>
            <person name="Bhonagiri V."/>
            <person name="Nash W."/>
            <person name="Johnson M."/>
            <person name="Thiruvilangam P."/>
            <person name="Wilson R."/>
        </authorList>
    </citation>
    <scope>NUCLEOTIDE SEQUENCE [LARGE SCALE GENOMIC DNA]</scope>
    <source>
        <strain>ATCC BAA-731 / CDC346-86 / RSK2980</strain>
    </source>
</reference>
<sequence>MAQHSVYFPDAFLAQMREAMPSTLSFDEFIAACQRPLRRSIRINTLKISVADFLALTAPYGWLLTPIPWCDEGFWIERDDEDALPLGSTAEHLSGLFYIQEASSMLPVAALFADDNHPQRVMDMAAAPGSKTTQIAARMGNHGAILANEFSASRVKILHANLCRCGVANTALTHFDGRVFGAALPEMFDAILLDAPCSGEGVVRKDPDALKNWSPESNLDIAATQRELLESAFHALRPGGTLVYSTCTLNRQENEAVCLWLKETYTDAVEFLPLNDLFPDADRALTPEGFLHVFPQIYDCEGFFVARLRKISSLPALPAPTYKVGNFPFIPLKGHEALHITQAASAVGLLWDENLHLWQREKEVWLFPAAIESLIGKVRFSRLGIKLAESHNKGYRWQHEATVALACPNHAHALELSPQEAEEWYRGRDIYPQTIPAVDDVLVTFQHQPLGLAKRIGSRIKNSYPRELVRDGKLFTSNV</sequence>
<organism>
    <name type="scientific">Salmonella arizonae (strain ATCC BAA-731 / CDC346-86 / RSK2980)</name>
    <dbReference type="NCBI Taxonomy" id="41514"/>
    <lineage>
        <taxon>Bacteria</taxon>
        <taxon>Pseudomonadati</taxon>
        <taxon>Pseudomonadota</taxon>
        <taxon>Gammaproteobacteria</taxon>
        <taxon>Enterobacterales</taxon>
        <taxon>Enterobacteriaceae</taxon>
        <taxon>Salmonella</taxon>
    </lineage>
</organism>
<proteinExistence type="inferred from homology"/>
<keyword id="KW-0963">Cytoplasm</keyword>
<keyword id="KW-0489">Methyltransferase</keyword>
<keyword id="KW-1185">Reference proteome</keyword>
<keyword id="KW-0694">RNA-binding</keyword>
<keyword id="KW-0698">rRNA processing</keyword>
<keyword id="KW-0949">S-adenosyl-L-methionine</keyword>
<keyword id="KW-0808">Transferase</keyword>
<protein>
    <recommendedName>
        <fullName evidence="1">Ribosomal RNA small subunit methyltransferase F</fullName>
        <ecNumber evidence="1">2.1.1.178</ecNumber>
    </recommendedName>
    <alternativeName>
        <fullName evidence="1">16S rRNA m5C1407 methyltransferase</fullName>
    </alternativeName>
    <alternativeName>
        <fullName evidence="1">rRNA (cytosine-C(5)-)-methyltransferase RsmF</fullName>
    </alternativeName>
</protein>
<name>RSMF_SALAR</name>